<feature type="chain" id="PRO_1000082148" description="Succinate--CoA ligase [ADP-forming] subunit beta">
    <location>
        <begin position="1"/>
        <end position="386"/>
    </location>
</feature>
<feature type="binding site" evidence="1">
    <location>
        <position position="46"/>
    </location>
    <ligand>
        <name>ATP</name>
        <dbReference type="ChEBI" id="CHEBI:30616"/>
    </ligand>
</feature>
<feature type="binding site" evidence="1">
    <location>
        <position position="99"/>
    </location>
    <ligand>
        <name>ATP</name>
        <dbReference type="ChEBI" id="CHEBI:30616"/>
    </ligand>
</feature>
<feature type="binding site" evidence="1">
    <location>
        <position position="102"/>
    </location>
    <ligand>
        <name>ATP</name>
        <dbReference type="ChEBI" id="CHEBI:30616"/>
    </ligand>
</feature>
<feature type="binding site" evidence="1">
    <location>
        <position position="107"/>
    </location>
    <ligand>
        <name>ATP</name>
        <dbReference type="ChEBI" id="CHEBI:30616"/>
    </ligand>
</feature>
<feature type="binding site" evidence="1">
    <location>
        <position position="199"/>
    </location>
    <ligand>
        <name>Mg(2+)</name>
        <dbReference type="ChEBI" id="CHEBI:18420"/>
    </ligand>
</feature>
<feature type="binding site" evidence="1">
    <location>
        <position position="213"/>
    </location>
    <ligand>
        <name>Mg(2+)</name>
        <dbReference type="ChEBI" id="CHEBI:18420"/>
    </ligand>
</feature>
<feature type="binding site" evidence="1">
    <location>
        <position position="264"/>
    </location>
    <ligand>
        <name>substrate</name>
        <note>ligand shared with subunit alpha</note>
    </ligand>
</feature>
<feature type="binding site" evidence="1">
    <location>
        <begin position="321"/>
        <end position="323"/>
    </location>
    <ligand>
        <name>substrate</name>
        <note>ligand shared with subunit alpha</note>
    </ligand>
</feature>
<name>SUCC_ORITB</name>
<keyword id="KW-0067">ATP-binding</keyword>
<keyword id="KW-0436">Ligase</keyword>
<keyword id="KW-0460">Magnesium</keyword>
<keyword id="KW-0479">Metal-binding</keyword>
<keyword id="KW-0547">Nucleotide-binding</keyword>
<keyword id="KW-1185">Reference proteome</keyword>
<keyword id="KW-0816">Tricarboxylic acid cycle</keyword>
<dbReference type="EC" id="6.2.1.5" evidence="1"/>
<dbReference type="EMBL" id="AM494475">
    <property type="protein sequence ID" value="CAM79217.1"/>
    <property type="molecule type" value="Genomic_DNA"/>
</dbReference>
<dbReference type="RefSeq" id="WP_011944298.1">
    <property type="nucleotide sequence ID" value="NC_009488.1"/>
</dbReference>
<dbReference type="SMR" id="A5CC52"/>
<dbReference type="KEGG" id="ots:OTBS_0151"/>
<dbReference type="eggNOG" id="COG0045">
    <property type="taxonomic scope" value="Bacteria"/>
</dbReference>
<dbReference type="HOGENOM" id="CLU_037430_0_2_5"/>
<dbReference type="UniPathway" id="UPA00223">
    <property type="reaction ID" value="UER00999"/>
</dbReference>
<dbReference type="Proteomes" id="UP000001565">
    <property type="component" value="Chromosome"/>
</dbReference>
<dbReference type="GO" id="GO:0005829">
    <property type="term" value="C:cytosol"/>
    <property type="evidence" value="ECO:0007669"/>
    <property type="project" value="TreeGrafter"/>
</dbReference>
<dbReference type="GO" id="GO:0042709">
    <property type="term" value="C:succinate-CoA ligase complex"/>
    <property type="evidence" value="ECO:0007669"/>
    <property type="project" value="TreeGrafter"/>
</dbReference>
<dbReference type="GO" id="GO:0005524">
    <property type="term" value="F:ATP binding"/>
    <property type="evidence" value="ECO:0007669"/>
    <property type="project" value="UniProtKB-UniRule"/>
</dbReference>
<dbReference type="GO" id="GO:0000287">
    <property type="term" value="F:magnesium ion binding"/>
    <property type="evidence" value="ECO:0007669"/>
    <property type="project" value="UniProtKB-UniRule"/>
</dbReference>
<dbReference type="GO" id="GO:0004775">
    <property type="term" value="F:succinate-CoA ligase (ADP-forming) activity"/>
    <property type="evidence" value="ECO:0007669"/>
    <property type="project" value="UniProtKB-UniRule"/>
</dbReference>
<dbReference type="GO" id="GO:0004776">
    <property type="term" value="F:succinate-CoA ligase (GDP-forming) activity"/>
    <property type="evidence" value="ECO:0007669"/>
    <property type="project" value="RHEA"/>
</dbReference>
<dbReference type="GO" id="GO:0006104">
    <property type="term" value="P:succinyl-CoA metabolic process"/>
    <property type="evidence" value="ECO:0007669"/>
    <property type="project" value="TreeGrafter"/>
</dbReference>
<dbReference type="GO" id="GO:0006099">
    <property type="term" value="P:tricarboxylic acid cycle"/>
    <property type="evidence" value="ECO:0007669"/>
    <property type="project" value="UniProtKB-UniRule"/>
</dbReference>
<dbReference type="FunFam" id="3.30.1490.20:FF:000002">
    <property type="entry name" value="Succinate--CoA ligase [ADP-forming] subunit beta"/>
    <property type="match status" value="1"/>
</dbReference>
<dbReference type="FunFam" id="3.30.470.20:FF:000002">
    <property type="entry name" value="Succinate--CoA ligase [ADP-forming] subunit beta"/>
    <property type="match status" value="1"/>
</dbReference>
<dbReference type="FunFam" id="3.40.50.261:FF:000001">
    <property type="entry name" value="Succinate--CoA ligase [ADP-forming] subunit beta"/>
    <property type="match status" value="1"/>
</dbReference>
<dbReference type="Gene3D" id="3.30.1490.20">
    <property type="entry name" value="ATP-grasp fold, A domain"/>
    <property type="match status" value="1"/>
</dbReference>
<dbReference type="Gene3D" id="3.30.470.20">
    <property type="entry name" value="ATP-grasp fold, B domain"/>
    <property type="match status" value="1"/>
</dbReference>
<dbReference type="Gene3D" id="3.40.50.261">
    <property type="entry name" value="Succinyl-CoA synthetase domains"/>
    <property type="match status" value="1"/>
</dbReference>
<dbReference type="HAMAP" id="MF_00558">
    <property type="entry name" value="Succ_CoA_beta"/>
    <property type="match status" value="1"/>
</dbReference>
<dbReference type="InterPro" id="IPR013650">
    <property type="entry name" value="ATP-grasp_succ-CoA_synth-type"/>
</dbReference>
<dbReference type="InterPro" id="IPR013815">
    <property type="entry name" value="ATP_grasp_subdomain_1"/>
</dbReference>
<dbReference type="InterPro" id="IPR017866">
    <property type="entry name" value="Succ-CoA_synthase_bsu_CS"/>
</dbReference>
<dbReference type="InterPro" id="IPR005811">
    <property type="entry name" value="SUCC_ACL_C"/>
</dbReference>
<dbReference type="InterPro" id="IPR005809">
    <property type="entry name" value="Succ_CoA_ligase-like_bsu"/>
</dbReference>
<dbReference type="InterPro" id="IPR016102">
    <property type="entry name" value="Succinyl-CoA_synth-like"/>
</dbReference>
<dbReference type="NCBIfam" id="NF001913">
    <property type="entry name" value="PRK00696.1"/>
    <property type="match status" value="1"/>
</dbReference>
<dbReference type="NCBIfam" id="TIGR01016">
    <property type="entry name" value="sucCoAbeta"/>
    <property type="match status" value="1"/>
</dbReference>
<dbReference type="PANTHER" id="PTHR11815:SF10">
    <property type="entry name" value="SUCCINATE--COA LIGASE [GDP-FORMING] SUBUNIT BETA, MITOCHONDRIAL"/>
    <property type="match status" value="1"/>
</dbReference>
<dbReference type="PANTHER" id="PTHR11815">
    <property type="entry name" value="SUCCINYL-COA SYNTHETASE BETA CHAIN"/>
    <property type="match status" value="1"/>
</dbReference>
<dbReference type="Pfam" id="PF08442">
    <property type="entry name" value="ATP-grasp_2"/>
    <property type="match status" value="1"/>
</dbReference>
<dbReference type="Pfam" id="PF00549">
    <property type="entry name" value="Ligase_CoA"/>
    <property type="match status" value="1"/>
</dbReference>
<dbReference type="PIRSF" id="PIRSF001554">
    <property type="entry name" value="SucCS_beta"/>
    <property type="match status" value="1"/>
</dbReference>
<dbReference type="SUPFAM" id="SSF56059">
    <property type="entry name" value="Glutathione synthetase ATP-binding domain-like"/>
    <property type="match status" value="1"/>
</dbReference>
<dbReference type="SUPFAM" id="SSF52210">
    <property type="entry name" value="Succinyl-CoA synthetase domains"/>
    <property type="match status" value="1"/>
</dbReference>
<dbReference type="PROSITE" id="PS01217">
    <property type="entry name" value="SUCCINYL_COA_LIG_3"/>
    <property type="match status" value="1"/>
</dbReference>
<reference key="1">
    <citation type="journal article" date="2007" name="Proc. Natl. Acad. Sci. U.S.A.">
        <title>The Orientia tsutsugamushi genome reveals massive proliferation of conjugative type IV secretion system and host-cell interaction genes.</title>
        <authorList>
            <person name="Cho N.-H."/>
            <person name="Kim H.-R."/>
            <person name="Lee J.-H."/>
            <person name="Kim S.-Y."/>
            <person name="Kim J."/>
            <person name="Cha S."/>
            <person name="Kim S.-Y."/>
            <person name="Darby A.C."/>
            <person name="Fuxelius H.-H."/>
            <person name="Yin J."/>
            <person name="Kim J.H."/>
            <person name="Kim J."/>
            <person name="Lee S.J."/>
            <person name="Koh Y.-S."/>
            <person name="Jang W.-J."/>
            <person name="Park K.-H."/>
            <person name="Andersson S.G.E."/>
            <person name="Choi M.-S."/>
            <person name="Kim I.-S."/>
        </authorList>
    </citation>
    <scope>NUCLEOTIDE SEQUENCE [LARGE SCALE GENOMIC DNA]</scope>
    <source>
        <strain>Boryong</strain>
    </source>
</reference>
<gene>
    <name evidence="1" type="primary">sucC</name>
    <name type="ordered locus">OTBS_0151</name>
</gene>
<accession>A5CC52</accession>
<sequence length="386" mass="42001">MNIHEYQAKEILSKYNVPIQPGIAILKYEDIDYAIDSLATDTFVIKAQIHAGGRKIGGGIKISNDKNEAKNLAKNMWGMNLVTPQTGPKGQKVQRIYIESAAKIKLELYLGAVIDRSNHCITFMASSAGGINIEEVAHTNPDKIIKVKINILTGIQPFHSRKIIFQLGLTGDLAKQMAKIMSAVYSMLINTDATQVEINPLIITLDDKLIALDAKINFDDSALFRQPLIQGMRDEDEEDHLELRATKADLSYVRMNGNIGCMVNGAGLAMATMDIIKLYGAEPANFLDVGGSADKKRVAEALKIISSDQNVKGILINIFGGIMRCDIIAEGVLAAAKEINLSIPLVVRLAGTNFELGKEILSNSKLQIVAANDLDDAARKIVEAVS</sequence>
<comment type="function">
    <text evidence="1">Succinyl-CoA synthetase functions in the citric acid cycle (TCA), coupling the hydrolysis of succinyl-CoA to the synthesis of either ATP or GTP and thus represents the only step of substrate-level phosphorylation in the TCA. The beta subunit provides nucleotide specificity of the enzyme and binds the substrate succinate, while the binding sites for coenzyme A and phosphate are found in the alpha subunit.</text>
</comment>
<comment type="catalytic activity">
    <reaction evidence="1">
        <text>succinate + ATP + CoA = succinyl-CoA + ADP + phosphate</text>
        <dbReference type="Rhea" id="RHEA:17661"/>
        <dbReference type="ChEBI" id="CHEBI:30031"/>
        <dbReference type="ChEBI" id="CHEBI:30616"/>
        <dbReference type="ChEBI" id="CHEBI:43474"/>
        <dbReference type="ChEBI" id="CHEBI:57287"/>
        <dbReference type="ChEBI" id="CHEBI:57292"/>
        <dbReference type="ChEBI" id="CHEBI:456216"/>
        <dbReference type="EC" id="6.2.1.5"/>
    </reaction>
    <physiologicalReaction direction="right-to-left" evidence="1">
        <dbReference type="Rhea" id="RHEA:17663"/>
    </physiologicalReaction>
</comment>
<comment type="catalytic activity">
    <reaction evidence="1">
        <text>GTP + succinate + CoA = succinyl-CoA + GDP + phosphate</text>
        <dbReference type="Rhea" id="RHEA:22120"/>
        <dbReference type="ChEBI" id="CHEBI:30031"/>
        <dbReference type="ChEBI" id="CHEBI:37565"/>
        <dbReference type="ChEBI" id="CHEBI:43474"/>
        <dbReference type="ChEBI" id="CHEBI:57287"/>
        <dbReference type="ChEBI" id="CHEBI:57292"/>
        <dbReference type="ChEBI" id="CHEBI:58189"/>
    </reaction>
    <physiologicalReaction direction="right-to-left" evidence="1">
        <dbReference type="Rhea" id="RHEA:22122"/>
    </physiologicalReaction>
</comment>
<comment type="cofactor">
    <cofactor evidence="1">
        <name>Mg(2+)</name>
        <dbReference type="ChEBI" id="CHEBI:18420"/>
    </cofactor>
    <text evidence="1">Binds 1 Mg(2+) ion per subunit.</text>
</comment>
<comment type="pathway">
    <text evidence="1">Carbohydrate metabolism; tricarboxylic acid cycle; succinate from succinyl-CoA (ligase route): step 1/1.</text>
</comment>
<comment type="subunit">
    <text evidence="1">Heterotetramer of two alpha and two beta subunits.</text>
</comment>
<comment type="similarity">
    <text evidence="1">Belongs to the succinate/malate CoA ligase beta subunit family.</text>
</comment>
<evidence type="ECO:0000255" key="1">
    <source>
        <dbReference type="HAMAP-Rule" id="MF_00558"/>
    </source>
</evidence>
<protein>
    <recommendedName>
        <fullName evidence="1">Succinate--CoA ligase [ADP-forming] subunit beta</fullName>
        <ecNumber evidence="1">6.2.1.5</ecNumber>
    </recommendedName>
    <alternativeName>
        <fullName evidence="1">Succinyl-CoA synthetase subunit beta</fullName>
        <shortName evidence="1">SCS-beta</shortName>
    </alternativeName>
</protein>
<proteinExistence type="inferred from homology"/>
<organism>
    <name type="scientific">Orientia tsutsugamushi (strain Boryong)</name>
    <name type="common">Rickettsia tsutsugamushi</name>
    <dbReference type="NCBI Taxonomy" id="357244"/>
    <lineage>
        <taxon>Bacteria</taxon>
        <taxon>Pseudomonadati</taxon>
        <taxon>Pseudomonadota</taxon>
        <taxon>Alphaproteobacteria</taxon>
        <taxon>Rickettsiales</taxon>
        <taxon>Rickettsiaceae</taxon>
        <taxon>Rickettsieae</taxon>
        <taxon>Orientia</taxon>
    </lineage>
</organism>